<organism>
    <name type="scientific">Shigella flexneri</name>
    <dbReference type="NCBI Taxonomy" id="623"/>
    <lineage>
        <taxon>Bacteria</taxon>
        <taxon>Pseudomonadati</taxon>
        <taxon>Pseudomonadota</taxon>
        <taxon>Gammaproteobacteria</taxon>
        <taxon>Enterobacterales</taxon>
        <taxon>Enterobacteriaceae</taxon>
        <taxon>Shigella</taxon>
    </lineage>
</organism>
<feature type="chain" id="PRO_0000209380" description="Regulatory ATPase RavA">
    <location>
        <begin position="1"/>
        <end position="498"/>
    </location>
</feature>
<feature type="binding site" evidence="1">
    <location>
        <position position="23"/>
    </location>
    <ligand>
        <name>ADP</name>
        <dbReference type="ChEBI" id="CHEBI:456216"/>
    </ligand>
</feature>
<feature type="binding site" evidence="1">
    <location>
        <position position="49"/>
    </location>
    <ligand>
        <name>ADP</name>
        <dbReference type="ChEBI" id="CHEBI:456216"/>
    </ligand>
</feature>
<feature type="binding site" evidence="1">
    <location>
        <position position="50"/>
    </location>
    <ligand>
        <name>ADP</name>
        <dbReference type="ChEBI" id="CHEBI:456216"/>
    </ligand>
</feature>
<feature type="binding site" evidence="1">
    <location>
        <position position="51"/>
    </location>
    <ligand>
        <name>ADP</name>
        <dbReference type="ChEBI" id="CHEBI:456216"/>
    </ligand>
</feature>
<feature type="binding site" evidence="1">
    <location>
        <position position="52"/>
    </location>
    <ligand>
        <name>ADP</name>
        <dbReference type="ChEBI" id="CHEBI:456216"/>
    </ligand>
</feature>
<feature type="binding site" evidence="1">
    <location>
        <position position="53"/>
    </location>
    <ligand>
        <name>ADP</name>
        <dbReference type="ChEBI" id="CHEBI:456216"/>
    </ligand>
</feature>
<feature type="binding site" evidence="1">
    <location>
        <position position="54"/>
    </location>
    <ligand>
        <name>ADP</name>
        <dbReference type="ChEBI" id="CHEBI:456216"/>
    </ligand>
</feature>
<feature type="binding site" evidence="1">
    <location>
        <position position="196"/>
    </location>
    <ligand>
        <name>ADP</name>
        <dbReference type="ChEBI" id="CHEBI:456216"/>
    </ligand>
</feature>
<proteinExistence type="inferred from homology"/>
<gene>
    <name evidence="1" type="primary">ravA</name>
    <name type="ordered locus">SF3826</name>
    <name type="ordered locus">S3942</name>
</gene>
<sequence>MAHPHLLAERISRLSSSLEKGLYERSHAIRLCLLAALSGESVFLLGPPGIAKSLIARRLKFAFQNARAFEYLMTRFSTPEEVFGPLSIQALKDEGRYERLTSGYLPEAEIVFLDEIWKAGPAILNTLLTAINERQFRNGAHVEKIPMRLLVAASNELPEADSSLEALYDRMLIRLWLDKVQDKANFRSMLTSQQDENDNPVPDALQVTDEEYERWQKEIGEITLPDHVFELIFILRQQLDKLPDAPYVSDRRWKKAIRLLQASAFFSGRSAVAPVDLILLKDCLWYDAQSLNLIQQQIDVLMTGHAWQQQGMLTRLGAIVQRHLQLQQQQSDKTALTLIRLGGIFSRRQQYQLPVNVTASTLTLLLQKPLKLHDMEVVHISFERSALEQWLSKGGEIRGKLNGIGFAQKLNLEVDSTQHLVVRDVSLQGSTLALPGSSAEGLPGEIKQQLEELESDWRKQHALFSEQQKCLFIPGDWLGRIEDSLQDVGAQIRQAQQC</sequence>
<name>RAVA_SHIFL</name>
<reference key="1">
    <citation type="journal article" date="2002" name="Nucleic Acids Res.">
        <title>Genome sequence of Shigella flexneri 2a: insights into pathogenicity through comparison with genomes of Escherichia coli K12 and O157.</title>
        <authorList>
            <person name="Jin Q."/>
            <person name="Yuan Z."/>
            <person name="Xu J."/>
            <person name="Wang Y."/>
            <person name="Shen Y."/>
            <person name="Lu W."/>
            <person name="Wang J."/>
            <person name="Liu H."/>
            <person name="Yang J."/>
            <person name="Yang F."/>
            <person name="Zhang X."/>
            <person name="Zhang J."/>
            <person name="Yang G."/>
            <person name="Wu H."/>
            <person name="Qu D."/>
            <person name="Dong J."/>
            <person name="Sun L."/>
            <person name="Xue Y."/>
            <person name="Zhao A."/>
            <person name="Gao Y."/>
            <person name="Zhu J."/>
            <person name="Kan B."/>
            <person name="Ding K."/>
            <person name="Chen S."/>
            <person name="Cheng H."/>
            <person name="Yao Z."/>
            <person name="He B."/>
            <person name="Chen R."/>
            <person name="Ma D."/>
            <person name="Qiang B."/>
            <person name="Wen Y."/>
            <person name="Hou Y."/>
            <person name="Yu J."/>
        </authorList>
    </citation>
    <scope>NUCLEOTIDE SEQUENCE [LARGE SCALE GENOMIC DNA]</scope>
    <source>
        <strain>301 / Serotype 2a</strain>
    </source>
</reference>
<reference key="2">
    <citation type="journal article" date="2003" name="Infect. Immun.">
        <title>Complete genome sequence and comparative genomics of Shigella flexneri serotype 2a strain 2457T.</title>
        <authorList>
            <person name="Wei J."/>
            <person name="Goldberg M.B."/>
            <person name="Burland V."/>
            <person name="Venkatesan M.M."/>
            <person name="Deng W."/>
            <person name="Fournier G."/>
            <person name="Mayhew G.F."/>
            <person name="Plunkett G. III"/>
            <person name="Rose D.J."/>
            <person name="Darling A."/>
            <person name="Mau B."/>
            <person name="Perna N.T."/>
            <person name="Payne S.M."/>
            <person name="Runyen-Janecky L.J."/>
            <person name="Zhou S."/>
            <person name="Schwartz D.C."/>
            <person name="Blattner F.R."/>
        </authorList>
    </citation>
    <scope>NUCLEOTIDE SEQUENCE [LARGE SCALE GENOMIC DNA]</scope>
    <source>
        <strain>ATCC 700930 / 2457T / Serotype 2a</strain>
    </source>
</reference>
<keyword id="KW-0067">ATP-binding</keyword>
<keyword id="KW-0143">Chaperone</keyword>
<keyword id="KW-0963">Cytoplasm</keyword>
<keyword id="KW-0378">Hydrolase</keyword>
<keyword id="KW-0547">Nucleotide-binding</keyword>
<keyword id="KW-1185">Reference proteome</keyword>
<dbReference type="EC" id="3.6.1.-" evidence="1"/>
<dbReference type="EMBL" id="AE005674">
    <property type="protein sequence ID" value="AAN45266.1"/>
    <property type="status" value="ALT_INIT"/>
    <property type="molecule type" value="Genomic_DNA"/>
</dbReference>
<dbReference type="EMBL" id="AE014073">
    <property type="protein sequence ID" value="AAP18931.1"/>
    <property type="status" value="ALT_INIT"/>
    <property type="molecule type" value="Genomic_DNA"/>
</dbReference>
<dbReference type="RefSeq" id="WP_005051985.1">
    <property type="nucleotide sequence ID" value="NZ_WPGW01000050.1"/>
</dbReference>
<dbReference type="SMR" id="Q83PJ3"/>
<dbReference type="STRING" id="198214.SF3826"/>
<dbReference type="PaxDb" id="198214-SF3826"/>
<dbReference type="KEGG" id="sfl:SF3826"/>
<dbReference type="KEGG" id="sfx:S3942"/>
<dbReference type="PATRIC" id="fig|198214.7.peg.4514"/>
<dbReference type="HOGENOM" id="CLU_018678_1_0_6"/>
<dbReference type="Proteomes" id="UP000001006">
    <property type="component" value="Chromosome"/>
</dbReference>
<dbReference type="Proteomes" id="UP000002673">
    <property type="component" value="Chromosome"/>
</dbReference>
<dbReference type="GO" id="GO:0005737">
    <property type="term" value="C:cytoplasm"/>
    <property type="evidence" value="ECO:0007669"/>
    <property type="project" value="UniProtKB-SubCell"/>
</dbReference>
<dbReference type="GO" id="GO:0005524">
    <property type="term" value="F:ATP binding"/>
    <property type="evidence" value="ECO:0007669"/>
    <property type="project" value="UniProtKB-KW"/>
</dbReference>
<dbReference type="GO" id="GO:0016887">
    <property type="term" value="F:ATP hydrolysis activity"/>
    <property type="evidence" value="ECO:0007669"/>
    <property type="project" value="UniProtKB-UniRule"/>
</dbReference>
<dbReference type="CDD" id="cd00009">
    <property type="entry name" value="AAA"/>
    <property type="match status" value="1"/>
</dbReference>
<dbReference type="FunFam" id="3.40.50.300:FF:000410">
    <property type="entry name" value="ATPase RavA"/>
    <property type="match status" value="1"/>
</dbReference>
<dbReference type="Gene3D" id="1.20.58.1510">
    <property type="match status" value="1"/>
</dbReference>
<dbReference type="Gene3D" id="2.40.128.430">
    <property type="match status" value="1"/>
</dbReference>
<dbReference type="Gene3D" id="3.40.50.300">
    <property type="entry name" value="P-loop containing nucleotide triphosphate hydrolases"/>
    <property type="match status" value="1"/>
</dbReference>
<dbReference type="HAMAP" id="MF_01625">
    <property type="entry name" value="ATPase_RavA"/>
    <property type="match status" value="1"/>
</dbReference>
<dbReference type="InterPro" id="IPR003593">
    <property type="entry name" value="AAA+_ATPase"/>
</dbReference>
<dbReference type="InterPro" id="IPR023671">
    <property type="entry name" value="ATPase_RavA"/>
</dbReference>
<dbReference type="InterPro" id="IPR022547">
    <property type="entry name" value="ATPase_RavA_C"/>
</dbReference>
<dbReference type="InterPro" id="IPR045427">
    <property type="entry name" value="MoxR"/>
</dbReference>
<dbReference type="InterPro" id="IPR027417">
    <property type="entry name" value="P-loop_NTPase"/>
</dbReference>
<dbReference type="InterPro" id="IPR041538">
    <property type="entry name" value="RavA-like_AAA_lid"/>
</dbReference>
<dbReference type="InterPro" id="IPR050513">
    <property type="entry name" value="RavA_ATPases"/>
</dbReference>
<dbReference type="InterPro" id="IPR046898">
    <property type="entry name" value="RavA_LARA_dom"/>
</dbReference>
<dbReference type="InterPro" id="IPR046932">
    <property type="entry name" value="RavA_LARA_sf"/>
</dbReference>
<dbReference type="NCBIfam" id="NF010054">
    <property type="entry name" value="PRK13531.1"/>
    <property type="match status" value="1"/>
</dbReference>
<dbReference type="PANTHER" id="PTHR32204">
    <property type="entry name" value="ATPASE RAVA"/>
    <property type="match status" value="1"/>
</dbReference>
<dbReference type="PANTHER" id="PTHR32204:SF0">
    <property type="entry name" value="ATPASE RAVA"/>
    <property type="match status" value="1"/>
</dbReference>
<dbReference type="Pfam" id="PF17868">
    <property type="entry name" value="AAA_lid_8"/>
    <property type="match status" value="1"/>
</dbReference>
<dbReference type="Pfam" id="PF12592">
    <property type="entry name" value="ATPase_RavA_C"/>
    <property type="match status" value="1"/>
</dbReference>
<dbReference type="Pfam" id="PF20030">
    <property type="entry name" value="bpMoxR"/>
    <property type="match status" value="1"/>
</dbReference>
<dbReference type="Pfam" id="PF20265">
    <property type="entry name" value="LARA_dom"/>
    <property type="match status" value="1"/>
</dbReference>
<dbReference type="SMART" id="SM00382">
    <property type="entry name" value="AAA"/>
    <property type="match status" value="1"/>
</dbReference>
<dbReference type="SUPFAM" id="SSF52540">
    <property type="entry name" value="P-loop containing nucleoside triphosphate hydrolases"/>
    <property type="match status" value="1"/>
</dbReference>
<accession>Q83PJ3</accession>
<accession>Q7BZA6</accession>
<evidence type="ECO:0000255" key="1">
    <source>
        <dbReference type="HAMAP-Rule" id="MF_01625"/>
    </source>
</evidence>
<evidence type="ECO:0000305" key="2"/>
<comment type="function">
    <text evidence="1">Component of the RavA-ViaA chaperone complex, which may act on the membrane to optimize the function of some of the respiratory chains. RavA functions as an ATPase.</text>
</comment>
<comment type="catalytic activity">
    <reaction evidence="1">
        <text>ATP + H2O = ADP + phosphate + H(+)</text>
        <dbReference type="Rhea" id="RHEA:13065"/>
        <dbReference type="ChEBI" id="CHEBI:15377"/>
        <dbReference type="ChEBI" id="CHEBI:15378"/>
        <dbReference type="ChEBI" id="CHEBI:30616"/>
        <dbReference type="ChEBI" id="CHEBI:43474"/>
        <dbReference type="ChEBI" id="CHEBI:456216"/>
    </reaction>
</comment>
<comment type="activity regulation">
    <text evidence="1">ATPase activity is stimulated by ViaA.</text>
</comment>
<comment type="subunit">
    <text evidence="1">Homohexamer. Interacts with ViaA.</text>
</comment>
<comment type="subcellular location">
    <subcellularLocation>
        <location evidence="1">Cytoplasm</location>
    </subcellularLocation>
</comment>
<comment type="similarity">
    <text evidence="1">Belongs to the RavA family.</text>
</comment>
<comment type="sequence caution" evidence="2">
    <conflict type="erroneous initiation">
        <sequence resource="EMBL-CDS" id="AAN45266"/>
    </conflict>
</comment>
<comment type="sequence caution" evidence="2">
    <conflict type="erroneous initiation">
        <sequence resource="EMBL-CDS" id="AAP18931"/>
    </conflict>
</comment>
<protein>
    <recommendedName>
        <fullName evidence="1">Regulatory ATPase RavA</fullName>
        <ecNumber evidence="1">3.6.1.-</ecNumber>
    </recommendedName>
    <alternativeName>
        <fullName evidence="1">Regulatory ATPase variant A</fullName>
    </alternativeName>
</protein>